<protein>
    <recommendedName>
        <fullName>Protein MLP2</fullName>
    </recommendedName>
    <alternativeName>
        <fullName>Myosin-like protein 2</fullName>
    </alternativeName>
</protein>
<name>MLP2_YEAST</name>
<proteinExistence type="evidence at protein level"/>
<dbReference type="EMBL" id="Z38059">
    <property type="protein sequence ID" value="CAA86129.1"/>
    <property type="molecule type" value="Genomic_DNA"/>
</dbReference>
<dbReference type="EMBL" id="BK006942">
    <property type="protein sequence ID" value="DAA08404.1"/>
    <property type="molecule type" value="Genomic_DNA"/>
</dbReference>
<dbReference type="PIR" id="S48385">
    <property type="entry name" value="S48385"/>
</dbReference>
<dbReference type="RefSeq" id="NP_012117.3">
    <property type="nucleotide sequence ID" value="NM_001179497.3"/>
</dbReference>
<dbReference type="SMR" id="P40457"/>
<dbReference type="BioGRID" id="34843">
    <property type="interactions" value="350"/>
</dbReference>
<dbReference type="ComplexPortal" id="CPX-824">
    <property type="entry name" value="Nuclear pore complex"/>
</dbReference>
<dbReference type="DIP" id="DIP-2388N"/>
<dbReference type="FunCoup" id="P40457">
    <property type="interactions" value="1372"/>
</dbReference>
<dbReference type="IntAct" id="P40457">
    <property type="interactions" value="21"/>
</dbReference>
<dbReference type="MINT" id="P40457"/>
<dbReference type="STRING" id="4932.YIL149C"/>
<dbReference type="GlyGen" id="P40457">
    <property type="glycosylation" value="2 sites, 1 O-linked glycan (1 site)"/>
</dbReference>
<dbReference type="iPTMnet" id="P40457"/>
<dbReference type="PaxDb" id="4932-YIL149C"/>
<dbReference type="PeptideAtlas" id="P40457"/>
<dbReference type="EnsemblFungi" id="YIL149C_mRNA">
    <property type="protein sequence ID" value="YIL149C"/>
    <property type="gene ID" value="YIL149C"/>
</dbReference>
<dbReference type="GeneID" id="854657"/>
<dbReference type="KEGG" id="sce:YIL149C"/>
<dbReference type="AGR" id="SGD:S000001411"/>
<dbReference type="SGD" id="S000001411">
    <property type="gene designation" value="MLP2"/>
</dbReference>
<dbReference type="VEuPathDB" id="FungiDB:YIL149C"/>
<dbReference type="eggNOG" id="KOG4674">
    <property type="taxonomic scope" value="Eukaryota"/>
</dbReference>
<dbReference type="GeneTree" id="ENSGT00940000176562"/>
<dbReference type="HOGENOM" id="CLU_002365_0_0_1"/>
<dbReference type="InParanoid" id="P40457"/>
<dbReference type="OMA" id="TLCEQQE"/>
<dbReference type="OrthoDB" id="343070at2759"/>
<dbReference type="BioCyc" id="YEAST:G3O-31398-MONOMER"/>
<dbReference type="BioGRID-ORCS" id="854657">
    <property type="hits" value="1 hit in 10 CRISPR screens"/>
</dbReference>
<dbReference type="PRO" id="PR:P40457"/>
<dbReference type="Proteomes" id="UP000002311">
    <property type="component" value="Chromosome IX"/>
</dbReference>
<dbReference type="RNAct" id="P40457">
    <property type="molecule type" value="protein"/>
</dbReference>
<dbReference type="GO" id="GO:0005739">
    <property type="term" value="C:mitochondrion"/>
    <property type="evidence" value="ECO:0007005"/>
    <property type="project" value="SGD"/>
</dbReference>
<dbReference type="GO" id="GO:0005635">
    <property type="term" value="C:nuclear envelope"/>
    <property type="evidence" value="ECO:0000314"/>
    <property type="project" value="SGD"/>
</dbReference>
<dbReference type="GO" id="GO:0005643">
    <property type="term" value="C:nuclear pore"/>
    <property type="evidence" value="ECO:0000318"/>
    <property type="project" value="GO_Central"/>
</dbReference>
<dbReference type="GO" id="GO:0044615">
    <property type="term" value="C:nuclear pore nuclear basket"/>
    <property type="evidence" value="ECO:0000314"/>
    <property type="project" value="SGD"/>
</dbReference>
<dbReference type="GO" id="GO:0005654">
    <property type="term" value="C:nucleoplasm"/>
    <property type="evidence" value="ECO:0000314"/>
    <property type="project" value="SGD"/>
</dbReference>
<dbReference type="GO" id="GO:0005816">
    <property type="term" value="C:spindle pole body"/>
    <property type="evidence" value="ECO:0000353"/>
    <property type="project" value="SGD"/>
</dbReference>
<dbReference type="GO" id="GO:0043021">
    <property type="term" value="F:ribonucleoprotein complex binding"/>
    <property type="evidence" value="ECO:0000316"/>
    <property type="project" value="SGD"/>
</dbReference>
<dbReference type="GO" id="GO:0017056">
    <property type="term" value="F:structural constituent of nuclear pore"/>
    <property type="evidence" value="ECO:0000318"/>
    <property type="project" value="GO_Central"/>
</dbReference>
<dbReference type="GO" id="GO:0006406">
    <property type="term" value="P:mRNA export from nucleus"/>
    <property type="evidence" value="ECO:0000318"/>
    <property type="project" value="GO_Central"/>
</dbReference>
<dbReference type="GO" id="GO:1901925">
    <property type="term" value="P:negative regulation of protein import into nucleus during spindle assembly checkpoint"/>
    <property type="evidence" value="ECO:0000316"/>
    <property type="project" value="SGD"/>
</dbReference>
<dbReference type="GO" id="GO:0006913">
    <property type="term" value="P:nucleocytoplasmic transport"/>
    <property type="evidence" value="ECO:0000303"/>
    <property type="project" value="ComplexPortal"/>
</dbReference>
<dbReference type="GO" id="GO:0016973">
    <property type="term" value="P:poly(A)+ mRNA export from nucleus"/>
    <property type="evidence" value="ECO:0000315"/>
    <property type="project" value="SGD"/>
</dbReference>
<dbReference type="GO" id="GO:0000973">
    <property type="term" value="P:post-transcriptional tethering of RNA polymerase II gene DNA at nuclear periphery"/>
    <property type="evidence" value="ECO:0000315"/>
    <property type="project" value="SGD"/>
</dbReference>
<dbReference type="GO" id="GO:0006606">
    <property type="term" value="P:protein import into nucleus"/>
    <property type="evidence" value="ECO:0000316"/>
    <property type="project" value="SGD"/>
</dbReference>
<dbReference type="GO" id="GO:0006355">
    <property type="term" value="P:regulation of DNA-templated transcription"/>
    <property type="evidence" value="ECO:0000316"/>
    <property type="project" value="SGD"/>
</dbReference>
<dbReference type="GO" id="GO:0051300">
    <property type="term" value="P:spindle pole body organization"/>
    <property type="evidence" value="ECO:0000315"/>
    <property type="project" value="SGD"/>
</dbReference>
<dbReference type="GO" id="GO:0034398">
    <property type="term" value="P:telomere tethering at nuclear periphery"/>
    <property type="evidence" value="ECO:0000316"/>
    <property type="project" value="SGD"/>
</dbReference>
<dbReference type="GO" id="GO:0000972">
    <property type="term" value="P:transcription-dependent tethering of RNA polymerase II gene DNA at nuclear periphery"/>
    <property type="evidence" value="ECO:0000315"/>
    <property type="project" value="SGD"/>
</dbReference>
<dbReference type="Gene3D" id="1.10.287.1490">
    <property type="match status" value="2"/>
</dbReference>
<dbReference type="PANTHER" id="PTHR18898:SF2">
    <property type="entry name" value="NUCLEOPROTEIN TPR"/>
    <property type="match status" value="1"/>
</dbReference>
<dbReference type="PANTHER" id="PTHR18898">
    <property type="entry name" value="NUCLEOPROTEIN TPR-RELATED"/>
    <property type="match status" value="1"/>
</dbReference>
<organism>
    <name type="scientific">Saccharomyces cerevisiae (strain ATCC 204508 / S288c)</name>
    <name type="common">Baker's yeast</name>
    <dbReference type="NCBI Taxonomy" id="559292"/>
    <lineage>
        <taxon>Eukaryota</taxon>
        <taxon>Fungi</taxon>
        <taxon>Dikarya</taxon>
        <taxon>Ascomycota</taxon>
        <taxon>Saccharomycotina</taxon>
        <taxon>Saccharomycetes</taxon>
        <taxon>Saccharomycetales</taxon>
        <taxon>Saccharomycetaceae</taxon>
        <taxon>Saccharomyces</taxon>
    </lineage>
</organism>
<sequence length="1679" mass="195141">MEDKISEFLNVPFESLQGVTYPVLRKLYKKIAKFERSEEEVTKLNVLVDEIKSQYYSRISKLKQLLDESSEQKNTAKEELNGLKDQLNEERSRYRREIDALKKQLHVSHEAMREVNDEKRVKEEYDIWQSRDQGNDSLNDDLNKENKLLRRKLMEMENILQRCKSNAISLQLKYDTSVQEKELMLQSKKLIEEKLSSFSKKTLTEEVTKSSHVENLEEKLYQMQSNYESVFTYNKFLLNQNKQLSQSVEEKVLEMKNLKDTASVEKAEFSKEMTLQKNMNDLLRSQLTSLEKDCSLRAIEKNDDNSCRNPEHTDVIDELIDTKLRLEKSKNECQRLQNIVMDCTKEEEATMTTSAVSPTVGKLFSDIKVLKRQLIKERNQKFQLQNQLEDFILELEHKTPELISFKERTKSLEHELKRSTELLETVSLTKRKQEREITSLRQKINGCEANIHSLVKQRLDLARQVKLLLLNTSAIQETASPLSQDELISLRKILESSNIVNENDSQAIITERLVEFSNVNELQEKNVELLNCIRILADKLENYEGKQDKTLQKVENQTIKEAKDAIIELENINAKMETRINILLRERDSYKLLASTEENKANTNSVTSMEAAREKKIRELEAELSSTKVENSAIIQNLRKELLIYKKSQCKKKTTLEDFENFKGLAKEKERMLEEAIDHLKAELEKQKSWVPSYIHVEKERASTELSQSRIKIKSLEYEISKLKKETASFIPTKESLTRDFEQCCKEKKELQMRLKESEISHNENKMDFSSKEGQYKAKIKELENNLERLRSDLQSKIQEIESIRSCKDSQLKWAQNTIDDTEMKMKSLLTELSNKETTIEKLSSEIENLDKELRKTKFQYKFLDQNSDASTLEPTLRKELEQIQVQLKDANSQIQAYEEIISSNENALIELKNELAKTKENYDAKIELEKKEKWAREEDLSRLRGELGEIRALQPKLKEGALHFVQQSEKLRNEVERIQKMIEKIEKMSTIVQLCKKKEMSQYQSTMKENKDLSELVIRLEKDAADCQAELTKTKSSLYSAQDLLDKHERKWMEEKADYERELISNIEQTESLRVENSVLIEKVDDTAANNGDKDHLKLVSLFSNLRHERNSLETKLTTCKRELAFVKQKNDSLEKTINDLQRTQTLSEKEYQCSAVIIDEFKDITKEVTQVNILKENNAILQKSLKNVTEKNREIYKQLNDRQEEISRLQRDLIQTKEQVSINSNKILVYESEMEQCKQRYQDLSQQQKDAQKKDIEKLTNEISDLKGKLSSAENANADLENKFNRLKKQAHEKLDASKKQQAALTNELNELKAIKDKLEQDLHFENAKVIDLDTKLKAHELQSEDVSRDHEKDTYRTLMEEIESLKKELQIFKTANSSSDAFEKLKVNMEKEKDRIIDERTKEFEKKLQETLNKSTSSEAEYSKDIETLKKEWLKEYEDETLRRIKEAEENLKKRIRLPSEERIQKIISKRKEELEEEFRKKLKENAGSLTFLDNKGSGEDAEEELWNSPSKGNSERPSAVAGFINQKNLKPQEQLKNVKNDVSFNDSQSMVTNKENNIVDSSAAGNKAIPTFSFGKPFFSSNTSSLQSFQNPFTASQSNINTNAPLRTLNIQPEVAVKAAINFSNVTDLTNNSTDGAKITEIGSTSKRPIESGTSSDPDTKKVKESPANDQASNE</sequence>
<accession>P40457</accession>
<accession>D6VVD8</accession>
<gene>
    <name type="primary">MLP2</name>
    <name type="ordered locus">YIL149C</name>
</gene>
<feature type="chain" id="PRO_0000096502" description="Protein MLP2">
    <location>
        <begin position="1"/>
        <end position="1679"/>
    </location>
</feature>
<feature type="region of interest" description="Disordered" evidence="2">
    <location>
        <begin position="1495"/>
        <end position="1521"/>
    </location>
</feature>
<feature type="region of interest" description="Disordered" evidence="2">
    <location>
        <begin position="1632"/>
        <end position="1679"/>
    </location>
</feature>
<feature type="coiled-coil region" evidence="1">
    <location>
        <begin position="32"/>
        <end position="176"/>
    </location>
</feature>
<feature type="coiled-coil region" evidence="1">
    <location>
        <begin position="233"/>
        <end position="466"/>
    </location>
</feature>
<feature type="coiled-coil region" evidence="1">
    <location>
        <begin position="516"/>
        <end position="1064"/>
    </location>
</feature>
<feature type="coiled-coil region" evidence="1">
    <location>
        <begin position="1099"/>
        <end position="1491"/>
    </location>
</feature>
<feature type="short sequence motif" description="Bipartite nuclear localization signal 1">
    <location>
        <begin position="417"/>
        <end position="433"/>
    </location>
</feature>
<feature type="short sequence motif" description="Bipartite nuclear localization signal 2">
    <location>
        <begin position="639"/>
        <end position="655"/>
    </location>
</feature>
<feature type="short sequence motif" description="Bipartite nuclear localization signal 3">
    <location>
        <begin position="1433"/>
        <end position="1449"/>
    </location>
</feature>
<feature type="compositionally biased region" description="Polar residues" evidence="2">
    <location>
        <begin position="1511"/>
        <end position="1520"/>
    </location>
</feature>
<feature type="compositionally biased region" description="Polar residues" evidence="2">
    <location>
        <begin position="1646"/>
        <end position="1661"/>
    </location>
</feature>
<feature type="compositionally biased region" description="Basic and acidic residues" evidence="2">
    <location>
        <begin position="1662"/>
        <end position="1671"/>
    </location>
</feature>
<feature type="modified residue" description="Phosphoserine" evidence="12">
    <location>
        <position position="1512"/>
    </location>
</feature>
<feature type="modified residue" description="Phosphoserine" evidence="13">
    <location>
        <position position="1670"/>
    </location>
</feature>
<evidence type="ECO:0000255" key="1"/>
<evidence type="ECO:0000256" key="2">
    <source>
        <dbReference type="SAM" id="MobiDB-lite"/>
    </source>
</evidence>
<evidence type="ECO:0000269" key="3">
    <source>
    </source>
</evidence>
<evidence type="ECO:0000269" key="4">
    <source>
    </source>
</evidence>
<evidence type="ECO:0000269" key="5">
    <source>
    </source>
</evidence>
<evidence type="ECO:0000269" key="6">
    <source>
    </source>
</evidence>
<evidence type="ECO:0000269" key="7">
    <source>
    </source>
</evidence>
<evidence type="ECO:0000269" key="8">
    <source>
    </source>
</evidence>
<evidence type="ECO:0000269" key="9">
    <source>
    </source>
</evidence>
<evidence type="ECO:0000269" key="10">
    <source>
    </source>
</evidence>
<evidence type="ECO:0000269" key="11">
    <source>
    </source>
</evidence>
<evidence type="ECO:0007744" key="12">
    <source>
    </source>
</evidence>
<evidence type="ECO:0007744" key="13">
    <source>
    </source>
</evidence>
<reference key="1">
    <citation type="journal article" date="1997" name="Nature">
        <title>The nucleotide sequence of Saccharomyces cerevisiae chromosome IX.</title>
        <authorList>
            <person name="Churcher C.M."/>
            <person name="Bowman S."/>
            <person name="Badcock K."/>
            <person name="Bankier A.T."/>
            <person name="Brown D."/>
            <person name="Chillingworth T."/>
            <person name="Connor R."/>
            <person name="Devlin K."/>
            <person name="Gentles S."/>
            <person name="Hamlin N."/>
            <person name="Harris D.E."/>
            <person name="Horsnell T."/>
            <person name="Hunt S."/>
            <person name="Jagels K."/>
            <person name="Jones M."/>
            <person name="Lye G."/>
            <person name="Moule S."/>
            <person name="Odell C."/>
            <person name="Pearson D."/>
            <person name="Rajandream M.A."/>
            <person name="Rice P."/>
            <person name="Rowley N."/>
            <person name="Skelton J."/>
            <person name="Smith V."/>
            <person name="Walsh S.V."/>
            <person name="Whitehead S."/>
            <person name="Barrell B.G."/>
        </authorList>
    </citation>
    <scope>NUCLEOTIDE SEQUENCE [LARGE SCALE GENOMIC DNA]</scope>
    <source>
        <strain>ATCC 204508 / S288c</strain>
    </source>
</reference>
<reference key="2">
    <citation type="journal article" date="2014" name="G3 (Bethesda)">
        <title>The reference genome sequence of Saccharomyces cerevisiae: Then and now.</title>
        <authorList>
            <person name="Engel S.R."/>
            <person name="Dietrich F.S."/>
            <person name="Fisk D.G."/>
            <person name="Binkley G."/>
            <person name="Balakrishnan R."/>
            <person name="Costanzo M.C."/>
            <person name="Dwight S.S."/>
            <person name="Hitz B.C."/>
            <person name="Karra K."/>
            <person name="Nash R.S."/>
            <person name="Weng S."/>
            <person name="Wong E.D."/>
            <person name="Lloyd P."/>
            <person name="Skrzypek M.S."/>
            <person name="Miyasato S.R."/>
            <person name="Simison M."/>
            <person name="Cherry J.M."/>
        </authorList>
    </citation>
    <scope>GENOME REANNOTATION</scope>
    <source>
        <strain>ATCC 204508 / S288c</strain>
    </source>
</reference>
<reference key="3">
    <citation type="journal article" date="1999" name="J. Cell Biol.">
        <title>Proteins connecting the nuclear pore complex with the nuclear interior.</title>
        <authorList>
            <person name="Strambio-de-Castillia C."/>
            <person name="Blobel G."/>
            <person name="Rout M.P."/>
        </authorList>
    </citation>
    <scope>FUNCTION</scope>
    <scope>FORMATION OF CHROMATIN EXCLUDING FILAMENTOUS STRUCTURES WITH MLP1</scope>
</reference>
<reference key="4">
    <citation type="journal article" date="2000" name="J. Biol. Chem.">
        <title>Mlp2p, a component of nuclear pore attached intranuclear filaments, associates with nic96p.</title>
        <authorList>
            <person name="Kosova B."/>
            <person name="Pante N."/>
            <person name="Rollenhagen C."/>
            <person name="Podtelejnikov A."/>
            <person name="Mann M."/>
            <person name="Aebi U."/>
            <person name="Hurt E.C."/>
        </authorList>
    </citation>
    <scope>FUNCTION</scope>
    <scope>INTERACTION WITH NIC96</scope>
</reference>
<reference key="5">
    <citation type="journal article" date="2000" name="Nature">
        <title>Nuclear pore complexes in the organization of silent telomeric chromatin.</title>
        <authorList>
            <person name="Galy V."/>
            <person name="Olivo-Marin J.-C."/>
            <person name="Scherthan H."/>
            <person name="Doye V."/>
            <person name="Rascalou N."/>
            <person name="Nehrbass U."/>
        </authorList>
    </citation>
    <scope>FUNCTION</scope>
    <scope>PERINUCLEAR TELOMERE CLUSTERING</scope>
    <scope>DOUBLE-STRAND BREAK REPAIR</scope>
    <scope>INTERACTION WITH YKU70 (HDF1)</scope>
</reference>
<reference key="6">
    <citation type="journal article" date="2002" name="Nat. Cell Biol.">
        <title>Nuclear architecture and spatial positioning help establish transcriptional states of telomeres in yeast.</title>
        <authorList>
            <person name="Feuerbach F."/>
            <person name="Galy V."/>
            <person name="Trelles-Sticken E."/>
            <person name="Fromont-Racine M."/>
            <person name="Jacquier A."/>
            <person name="Gilson E."/>
            <person name="Olivo-Marin J.-C."/>
            <person name="Scherthan H."/>
            <person name="Nehrbass U."/>
        </authorList>
    </citation>
    <scope>FUNCTION</scope>
    <scope>PERINUCLEAR-DEPENDENT SILENCING</scope>
    <scope>INTERACTION WITH NUP60</scope>
</reference>
<reference key="7">
    <citation type="journal article" date="2002" name="J. Struct. Biol.">
        <title>Myosin-like proteins 1 and 2 are not required for silencing or telomere anchoring, but act in the Tel1 pathway of telomere length control.</title>
        <authorList>
            <person name="Hediger F."/>
            <person name="Dubrana K."/>
            <person name="Gasser S.M."/>
        </authorList>
    </citation>
    <scope>FUNCTION</scope>
    <scope>TELOMERE LENGTH REGULATION</scope>
</reference>
<reference key="8">
    <citation type="journal article" date="2003" name="Nature">
        <title>Global analysis of protein expression in yeast.</title>
        <authorList>
            <person name="Ghaemmaghami S."/>
            <person name="Huh W.-K."/>
            <person name="Bower K."/>
            <person name="Howson R.W."/>
            <person name="Belle A."/>
            <person name="Dephoure N."/>
            <person name="O'Shea E.K."/>
            <person name="Weissman J.S."/>
        </authorList>
    </citation>
    <scope>LEVEL OF PROTEIN EXPRESSION [LARGE SCALE ANALYSIS]</scope>
</reference>
<reference key="9">
    <citation type="journal article" date="2004" name="Cell">
        <title>Nuclear retention of unspliced mRNAs in yeast is mediated by perinuclear Mlp1.</title>
        <authorList>
            <person name="Galy V."/>
            <person name="Gadal O."/>
            <person name="Fromont-Racine M."/>
            <person name="Romano A."/>
            <person name="Jacquier A."/>
            <person name="Nehrbass U."/>
        </authorList>
    </citation>
    <scope>FUNCTION</scope>
    <scope>SUBCELLULAR LOCATION</scope>
</reference>
<reference key="10">
    <citation type="journal article" date="2005" name="J. Cell Biol.">
        <title>The nuclear pore complex-associated protein, Mlp2p, binds to the yeast spindle pole body and promotes its efficient assembly.</title>
        <authorList>
            <person name="Niepel M."/>
            <person name="Strambio-de-Castillia C."/>
            <person name="Fasolo J."/>
            <person name="Chait B.T."/>
            <person name="Rout M.P."/>
        </authorList>
    </citation>
    <scope>IDENTIFICATION IN THE SPINDLE POLE BODY CORE COMPLEX</scope>
    <scope>INTERACTION WITH MLP1; SPC110; SPC42 AND SPC29</scope>
    <scope>SUBCELLULAR LOCATION</scope>
    <scope>FUNCTION</scope>
</reference>
<reference key="11">
    <citation type="journal article" date="2007" name="J. Proteome Res.">
        <title>Large-scale phosphorylation analysis of alpha-factor-arrested Saccharomyces cerevisiae.</title>
        <authorList>
            <person name="Li X."/>
            <person name="Gerber S.A."/>
            <person name="Rudner A.D."/>
            <person name="Beausoleil S.A."/>
            <person name="Haas W."/>
            <person name="Villen J."/>
            <person name="Elias J.E."/>
            <person name="Gygi S.P."/>
        </authorList>
    </citation>
    <scope>PHOSPHORYLATION [LARGE SCALE ANALYSIS] AT SER-1512</scope>
    <scope>IDENTIFICATION BY MASS SPECTROMETRY [LARGE SCALE ANALYSIS]</scope>
    <source>
        <strain>ADR376</strain>
    </source>
</reference>
<reference key="12">
    <citation type="journal article" date="2008" name="Mol. Cell. Proteomics">
        <title>A multidimensional chromatography technology for in-depth phosphoproteome analysis.</title>
        <authorList>
            <person name="Albuquerque C.P."/>
            <person name="Smolka M.B."/>
            <person name="Payne S.H."/>
            <person name="Bafna V."/>
            <person name="Eng J."/>
            <person name="Zhou H."/>
        </authorList>
    </citation>
    <scope>PHOSPHORYLATION [LARGE SCALE ANALYSIS] AT SER-1670</scope>
    <scope>IDENTIFICATION BY MASS SPECTROMETRY [LARGE SCALE ANALYSIS]</scope>
</reference>
<reference key="13">
    <citation type="journal article" date="2009" name="Science">
        <title>Global analysis of Cdk1 substrate phosphorylation sites provides insights into evolution.</title>
        <authorList>
            <person name="Holt L.J."/>
            <person name="Tuch B.B."/>
            <person name="Villen J."/>
            <person name="Johnson A.D."/>
            <person name="Gygi S.P."/>
            <person name="Morgan D.O."/>
        </authorList>
    </citation>
    <scope>IDENTIFICATION BY MASS SPECTROMETRY [LARGE SCALE ANALYSIS]</scope>
</reference>
<reference key="14">
    <citation type="journal article" date="2013" name="Mol. Biol. Cell">
        <title>The nuclear basket proteins Mlp1p and Mlp2p are part of a dynamic interactome including Esc1p and the proteasome.</title>
        <authorList>
            <person name="Niepel M."/>
            <person name="Molloy K.R."/>
            <person name="Williams R."/>
            <person name="Farr J.C."/>
            <person name="Meinema A.C."/>
            <person name="Vecchietti N."/>
            <person name="Cristea I.M."/>
            <person name="Chait B.T."/>
            <person name="Rout M.P."/>
            <person name="Strambio-De-Castillia C."/>
        </authorList>
    </citation>
    <scope>IDENTIFICATION BY MASS SPECTROMETRY</scope>
    <scope>FUNCTION</scope>
    <scope>IDENTIFICATION IN THE NUCLEAR PORE COMPLEX</scope>
    <scope>SUBCELLULAR LOCATION</scope>
</reference>
<keyword id="KW-0175">Coiled coil</keyword>
<keyword id="KW-0963">Cytoplasm</keyword>
<keyword id="KW-0206">Cytoskeleton</keyword>
<keyword id="KW-0509">mRNA transport</keyword>
<keyword id="KW-0906">Nuclear pore complex</keyword>
<keyword id="KW-0539">Nucleus</keyword>
<keyword id="KW-0597">Phosphoprotein</keyword>
<keyword id="KW-0653">Protein transport</keyword>
<keyword id="KW-1185">Reference proteome</keyword>
<keyword id="KW-0811">Translocation</keyword>
<keyword id="KW-0813">Transport</keyword>
<comment type="function">
    <text evidence="3 4 5 6 7 9 10 11">Together with the closely related MLP1, involved in the structural and functional organization of perinuclear chromatin (PubMed:10638763). MLP1/MLP2 associate with the nuclear pore complex and form filamentous structures along the nuclear periphery (PubMed:10085285, PubMed:10617624, PubMed:24152732). Has a role in the localization of Esc1 to nucleolar regions (PubMed:24152732). Together with MLP1, mediates tethering of the some telomeres to the nuclear periphery, probably mediated by YKU70/YKU80 (HDF1/HDF2) heterodimer and show perinuclear location dependent silencing (PubMed:11862215). MLP1 and MLP2 are involved in telomere length regulation but not silencing or telomere anchoring (PubMed:12490156). Plays a role in the incorporation of components into the spindle pole body (PubMed:10617624, PubMed:14718167, PubMed:16027220). Involved in double-strand break repair, probably also mediated by the YKU70/YKU80 (HDF1/HDF2) heterodimer (PubMed:10638763, PubMed:14718167, PubMed:16027220).</text>
</comment>
<comment type="subunit">
    <text evidence="4 5 6 10 11">Component of the nuclear complex (NPC) (PubMed:24152732). NPC constitutes the exclusive means of nucleocytoplasmic transport (PubMed:24152732). NPCs allow the passive diffusion of ions and small molecules and the active, nuclear transport receptor-mediated bidirectional transport of macromolecules such as proteins, RNAs, ribonucleoparticles (RNPs), and ribosomal subunits across the nuclear envelope (PubMed:24152732). Due to its 8-fold rotational symmetry, all subunits are present with 8 copies or multiples thereof (PubMed:24152732). Interacts with NUP60 and NIC96, which tether it to the nuclear pore complex. Component of the spindle pole body core in which it interacts directly with SPC110, SPC42 and SPC29. Also interacts with YKU70 (HDF1) and MLP1.</text>
</comment>
<comment type="interaction">
    <interactant intactId="EBI-25261">
        <id>P40457</id>
    </interactant>
    <interactant intactId="EBI-11009">
        <id>Q02455</id>
        <label>MLP1</label>
    </interactant>
    <organismsDiffer>false</organismsDiffer>
    <experiments>3</experiments>
</comment>
<comment type="interaction">
    <interactant intactId="EBI-25261">
        <id>P40457</id>
    </interactant>
    <interactant intactId="EBI-12369">
        <id>P32380</id>
        <label>SPC110</label>
    </interactant>
    <organismsDiffer>false</organismsDiffer>
    <experiments>3</experiments>
</comment>
<comment type="interaction">
    <interactant intactId="EBI-25261">
        <id>P40457</id>
    </interactant>
    <interactant intactId="EBI-12041">
        <id>P33419</id>
        <label>SPC29</label>
    </interactant>
    <organismsDiffer>false</organismsDiffer>
    <experiments>2</experiments>
</comment>
<comment type="interaction">
    <interactant intactId="EBI-25261">
        <id>P40457</id>
    </interactant>
    <interactant intactId="EBI-17777">
        <id>P36094</id>
        <label>SPC42</label>
    </interactant>
    <organismsDiffer>false</organismsDiffer>
    <experiments>3</experiments>
</comment>
<comment type="subcellular location">
    <subcellularLocation>
        <location>Nucleus</location>
    </subcellularLocation>
    <subcellularLocation>
        <location>Cytoplasm</location>
        <location>Cytoskeleton</location>
        <location>Microtubule organizing center</location>
        <location>Spindle pole body</location>
    </subcellularLocation>
    <subcellularLocation>
        <location evidence="11">Nucleus</location>
        <location evidence="11">Nuclear pore complex</location>
    </subcellularLocation>
    <text>Nuclear periphery, excluded from nuclear envelope adjacent to nucleolus.</text>
</comment>
<comment type="miscellaneous">
    <text evidence="8">Present with 2770 molecules/cell in log phase SD medium.</text>
</comment>